<organism>
    <name type="scientific">Aliivibrio fischeri (strain MJ11)</name>
    <name type="common">Vibrio fischeri</name>
    <dbReference type="NCBI Taxonomy" id="388396"/>
    <lineage>
        <taxon>Bacteria</taxon>
        <taxon>Pseudomonadati</taxon>
        <taxon>Pseudomonadota</taxon>
        <taxon>Gammaproteobacteria</taxon>
        <taxon>Vibrionales</taxon>
        <taxon>Vibrionaceae</taxon>
        <taxon>Aliivibrio</taxon>
    </lineage>
</organism>
<comment type="function">
    <text evidence="1">Phosphorylation of dTMP to form dTDP in both de novo and salvage pathways of dTTP synthesis.</text>
</comment>
<comment type="catalytic activity">
    <reaction evidence="1">
        <text>dTMP + ATP = dTDP + ADP</text>
        <dbReference type="Rhea" id="RHEA:13517"/>
        <dbReference type="ChEBI" id="CHEBI:30616"/>
        <dbReference type="ChEBI" id="CHEBI:58369"/>
        <dbReference type="ChEBI" id="CHEBI:63528"/>
        <dbReference type="ChEBI" id="CHEBI:456216"/>
        <dbReference type="EC" id="2.7.4.9"/>
    </reaction>
</comment>
<comment type="similarity">
    <text evidence="1">Belongs to the thymidylate kinase family.</text>
</comment>
<keyword id="KW-0067">ATP-binding</keyword>
<keyword id="KW-0418">Kinase</keyword>
<keyword id="KW-0545">Nucleotide biosynthesis</keyword>
<keyword id="KW-0547">Nucleotide-binding</keyword>
<keyword id="KW-0808">Transferase</keyword>
<feature type="chain" id="PRO_1000097443" description="Thymidylate kinase">
    <location>
        <begin position="1"/>
        <end position="210"/>
    </location>
</feature>
<feature type="binding site" evidence="1">
    <location>
        <begin position="9"/>
        <end position="16"/>
    </location>
    <ligand>
        <name>ATP</name>
        <dbReference type="ChEBI" id="CHEBI:30616"/>
    </ligand>
</feature>
<gene>
    <name evidence="1" type="primary">tmk</name>
    <name type="ordered locus">VFMJ11_1862</name>
</gene>
<accession>B5FG34</accession>
<protein>
    <recommendedName>
        <fullName evidence="1">Thymidylate kinase</fullName>
        <ecNumber evidence="1">2.7.4.9</ecNumber>
    </recommendedName>
    <alternativeName>
        <fullName evidence="1">dTMP kinase</fullName>
    </alternativeName>
</protein>
<name>KTHY_ALIFM</name>
<dbReference type="EC" id="2.7.4.9" evidence="1"/>
<dbReference type="EMBL" id="CP001139">
    <property type="protein sequence ID" value="ACH65846.1"/>
    <property type="molecule type" value="Genomic_DNA"/>
</dbReference>
<dbReference type="RefSeq" id="WP_012533322.1">
    <property type="nucleotide sequence ID" value="NC_011184.1"/>
</dbReference>
<dbReference type="SMR" id="B5FG34"/>
<dbReference type="KEGG" id="vfm:VFMJ11_1862"/>
<dbReference type="HOGENOM" id="CLU_049131_0_1_6"/>
<dbReference type="Proteomes" id="UP000001857">
    <property type="component" value="Chromosome I"/>
</dbReference>
<dbReference type="GO" id="GO:0005829">
    <property type="term" value="C:cytosol"/>
    <property type="evidence" value="ECO:0007669"/>
    <property type="project" value="TreeGrafter"/>
</dbReference>
<dbReference type="GO" id="GO:0005524">
    <property type="term" value="F:ATP binding"/>
    <property type="evidence" value="ECO:0007669"/>
    <property type="project" value="UniProtKB-UniRule"/>
</dbReference>
<dbReference type="GO" id="GO:0004798">
    <property type="term" value="F:dTMP kinase activity"/>
    <property type="evidence" value="ECO:0007669"/>
    <property type="project" value="UniProtKB-UniRule"/>
</dbReference>
<dbReference type="GO" id="GO:0006233">
    <property type="term" value="P:dTDP biosynthetic process"/>
    <property type="evidence" value="ECO:0007669"/>
    <property type="project" value="InterPro"/>
</dbReference>
<dbReference type="GO" id="GO:0006235">
    <property type="term" value="P:dTTP biosynthetic process"/>
    <property type="evidence" value="ECO:0007669"/>
    <property type="project" value="UniProtKB-UniRule"/>
</dbReference>
<dbReference type="GO" id="GO:0006227">
    <property type="term" value="P:dUDP biosynthetic process"/>
    <property type="evidence" value="ECO:0007669"/>
    <property type="project" value="TreeGrafter"/>
</dbReference>
<dbReference type="CDD" id="cd01672">
    <property type="entry name" value="TMPK"/>
    <property type="match status" value="1"/>
</dbReference>
<dbReference type="FunFam" id="3.40.50.300:FF:000321">
    <property type="entry name" value="Thymidylate kinase"/>
    <property type="match status" value="1"/>
</dbReference>
<dbReference type="Gene3D" id="3.40.50.300">
    <property type="entry name" value="P-loop containing nucleotide triphosphate hydrolases"/>
    <property type="match status" value="1"/>
</dbReference>
<dbReference type="HAMAP" id="MF_00165">
    <property type="entry name" value="Thymidylate_kinase"/>
    <property type="match status" value="1"/>
</dbReference>
<dbReference type="InterPro" id="IPR027417">
    <property type="entry name" value="P-loop_NTPase"/>
</dbReference>
<dbReference type="InterPro" id="IPR039430">
    <property type="entry name" value="Thymidylate_kin-like_dom"/>
</dbReference>
<dbReference type="InterPro" id="IPR018095">
    <property type="entry name" value="Thymidylate_kin_CS"/>
</dbReference>
<dbReference type="InterPro" id="IPR018094">
    <property type="entry name" value="Thymidylate_kinase"/>
</dbReference>
<dbReference type="NCBIfam" id="TIGR00041">
    <property type="entry name" value="DTMP_kinase"/>
    <property type="match status" value="1"/>
</dbReference>
<dbReference type="PANTHER" id="PTHR10344">
    <property type="entry name" value="THYMIDYLATE KINASE"/>
    <property type="match status" value="1"/>
</dbReference>
<dbReference type="PANTHER" id="PTHR10344:SF4">
    <property type="entry name" value="UMP-CMP KINASE 2, MITOCHONDRIAL"/>
    <property type="match status" value="1"/>
</dbReference>
<dbReference type="Pfam" id="PF02223">
    <property type="entry name" value="Thymidylate_kin"/>
    <property type="match status" value="1"/>
</dbReference>
<dbReference type="SUPFAM" id="SSF52540">
    <property type="entry name" value="P-loop containing nucleoside triphosphate hydrolases"/>
    <property type="match status" value="1"/>
</dbReference>
<dbReference type="PROSITE" id="PS01331">
    <property type="entry name" value="THYMIDYLATE_KINASE"/>
    <property type="match status" value="1"/>
</dbReference>
<reference key="1">
    <citation type="submission" date="2008-08" db="EMBL/GenBank/DDBJ databases">
        <title>Complete sequence of Vibrio fischeri strain MJ11.</title>
        <authorList>
            <person name="Mandel M.J."/>
            <person name="Stabb E.V."/>
            <person name="Ruby E.G."/>
            <person name="Ferriera S."/>
            <person name="Johnson J."/>
            <person name="Kravitz S."/>
            <person name="Beeson K."/>
            <person name="Sutton G."/>
            <person name="Rogers Y.-H."/>
            <person name="Friedman R."/>
            <person name="Frazier M."/>
            <person name="Venter J.C."/>
        </authorList>
    </citation>
    <scope>NUCLEOTIDE SEQUENCE [LARGE SCALE GENOMIC DNA]</scope>
    <source>
        <strain>MJ11</strain>
    </source>
</reference>
<evidence type="ECO:0000255" key="1">
    <source>
        <dbReference type="HAMAP-Rule" id="MF_00165"/>
    </source>
</evidence>
<proteinExistence type="inferred from homology"/>
<sequence length="210" mass="23196">MSKFIVIEGLEGAGKSTAIKNVLATLAKHGITSPVTTREPGGTPLAEKMRELVKQGHPDEPLTDMAELLLLYAARAQLVGNVIKPALAKGEWVVGDRHDLSSQAYQGGGRGFDRDLMMTMRNTVLGDFKPDLTIYMDIDPKLGLQRASARGELDRIEQMKLDFFERSRERYLEFANSDESIITIDAGQDLETVTQSIITALEAWLVNNGY</sequence>